<gene>
    <name evidence="1" type="primary">pstB5</name>
    <name type="ordered locus">Ava_4513</name>
</gene>
<feature type="chain" id="PRO_0000272420" description="Phosphate import ATP-binding protein PstB 5">
    <location>
        <begin position="1"/>
        <end position="260"/>
    </location>
</feature>
<feature type="domain" description="ABC transporter" evidence="1">
    <location>
        <begin position="9"/>
        <end position="255"/>
    </location>
</feature>
<feature type="binding site" evidence="1">
    <location>
        <begin position="41"/>
        <end position="48"/>
    </location>
    <ligand>
        <name>ATP</name>
        <dbReference type="ChEBI" id="CHEBI:30616"/>
    </ligand>
</feature>
<protein>
    <recommendedName>
        <fullName evidence="1">Phosphate import ATP-binding protein PstB 5</fullName>
        <ecNumber evidence="1">7.3.2.1</ecNumber>
    </recommendedName>
    <alternativeName>
        <fullName evidence="1">ABC phosphate transporter 5</fullName>
    </alternativeName>
    <alternativeName>
        <fullName evidence="1">Phosphate-transporting ATPase 5</fullName>
    </alternativeName>
</protein>
<accession>Q3M4H5</accession>
<sequence>MNQQLIPAIKVKDLSFYYNTSKAIEGISMDIYRNKVTAIIGPSGCGKSTFIKTLNRISELEGPVKVEGVVDFFGQNIYDPRININRLRRQIGMVFQRPNPFPMSIYENVAYGVRISAKLPQADLDEIVESALKGAALWQEVKDKLNKSALGLSGGQQQRLCIARALAIKPKVLLMDEPCSALDPIATMKVEELIHSLRSELTIAIVTHNMQQATRVSDFTAFFSTDESRIGQMVEFGVTTQIFSNPLDSRTRDYVSGRFG</sequence>
<comment type="function">
    <text evidence="1">Part of the ABC transporter complex PstSACB involved in phosphate import. Responsible for energy coupling to the transport system.</text>
</comment>
<comment type="catalytic activity">
    <reaction evidence="1">
        <text>phosphate(out) + ATP + H2O = ADP + 2 phosphate(in) + H(+)</text>
        <dbReference type="Rhea" id="RHEA:24440"/>
        <dbReference type="ChEBI" id="CHEBI:15377"/>
        <dbReference type="ChEBI" id="CHEBI:15378"/>
        <dbReference type="ChEBI" id="CHEBI:30616"/>
        <dbReference type="ChEBI" id="CHEBI:43474"/>
        <dbReference type="ChEBI" id="CHEBI:456216"/>
        <dbReference type="EC" id="7.3.2.1"/>
    </reaction>
</comment>
<comment type="subunit">
    <text evidence="1">The complex is composed of two ATP-binding proteins (PstB), two transmembrane proteins (PstC and PstA) and a solute-binding protein (PstS).</text>
</comment>
<comment type="subcellular location">
    <subcellularLocation>
        <location evidence="1">Cell inner membrane</location>
        <topology evidence="1">Peripheral membrane protein</topology>
    </subcellularLocation>
</comment>
<comment type="similarity">
    <text evidence="1">Belongs to the ABC transporter superfamily. Phosphate importer (TC 3.A.1.7) family.</text>
</comment>
<dbReference type="EC" id="7.3.2.1" evidence="1"/>
<dbReference type="EMBL" id="CP000117">
    <property type="protein sequence ID" value="ABA24111.1"/>
    <property type="molecule type" value="Genomic_DNA"/>
</dbReference>
<dbReference type="SMR" id="Q3M4H5"/>
<dbReference type="STRING" id="240292.Ava_4513"/>
<dbReference type="KEGG" id="ava:Ava_4513"/>
<dbReference type="eggNOG" id="COG1117">
    <property type="taxonomic scope" value="Bacteria"/>
</dbReference>
<dbReference type="HOGENOM" id="CLU_000604_1_22_3"/>
<dbReference type="Proteomes" id="UP000002533">
    <property type="component" value="Chromosome"/>
</dbReference>
<dbReference type="GO" id="GO:0005886">
    <property type="term" value="C:plasma membrane"/>
    <property type="evidence" value="ECO:0007669"/>
    <property type="project" value="UniProtKB-SubCell"/>
</dbReference>
<dbReference type="GO" id="GO:0005524">
    <property type="term" value="F:ATP binding"/>
    <property type="evidence" value="ECO:0007669"/>
    <property type="project" value="UniProtKB-KW"/>
</dbReference>
<dbReference type="GO" id="GO:0016887">
    <property type="term" value="F:ATP hydrolysis activity"/>
    <property type="evidence" value="ECO:0007669"/>
    <property type="project" value="InterPro"/>
</dbReference>
<dbReference type="GO" id="GO:0015415">
    <property type="term" value="F:ATPase-coupled phosphate ion transmembrane transporter activity"/>
    <property type="evidence" value="ECO:0007669"/>
    <property type="project" value="UniProtKB-EC"/>
</dbReference>
<dbReference type="GO" id="GO:0035435">
    <property type="term" value="P:phosphate ion transmembrane transport"/>
    <property type="evidence" value="ECO:0007669"/>
    <property type="project" value="InterPro"/>
</dbReference>
<dbReference type="CDD" id="cd03260">
    <property type="entry name" value="ABC_PstB_phosphate_transporter"/>
    <property type="match status" value="1"/>
</dbReference>
<dbReference type="Gene3D" id="3.40.50.300">
    <property type="entry name" value="P-loop containing nucleotide triphosphate hydrolases"/>
    <property type="match status" value="1"/>
</dbReference>
<dbReference type="InterPro" id="IPR003593">
    <property type="entry name" value="AAA+_ATPase"/>
</dbReference>
<dbReference type="InterPro" id="IPR003439">
    <property type="entry name" value="ABC_transporter-like_ATP-bd"/>
</dbReference>
<dbReference type="InterPro" id="IPR017871">
    <property type="entry name" value="ABC_transporter-like_CS"/>
</dbReference>
<dbReference type="InterPro" id="IPR027417">
    <property type="entry name" value="P-loop_NTPase"/>
</dbReference>
<dbReference type="InterPro" id="IPR005670">
    <property type="entry name" value="PstB-like"/>
</dbReference>
<dbReference type="NCBIfam" id="TIGR00972">
    <property type="entry name" value="3a0107s01c2"/>
    <property type="match status" value="1"/>
</dbReference>
<dbReference type="NCBIfam" id="NF010851">
    <property type="entry name" value="PRK14258.1"/>
    <property type="match status" value="1"/>
</dbReference>
<dbReference type="PANTHER" id="PTHR43423">
    <property type="entry name" value="ABC TRANSPORTER I FAMILY MEMBER 17"/>
    <property type="match status" value="1"/>
</dbReference>
<dbReference type="PANTHER" id="PTHR43423:SF9">
    <property type="entry name" value="PHOSPHATE IMPORT ATP-BINDING PROTEIN PSTB 3"/>
    <property type="match status" value="1"/>
</dbReference>
<dbReference type="Pfam" id="PF00005">
    <property type="entry name" value="ABC_tran"/>
    <property type="match status" value="1"/>
</dbReference>
<dbReference type="SMART" id="SM00382">
    <property type="entry name" value="AAA"/>
    <property type="match status" value="1"/>
</dbReference>
<dbReference type="SUPFAM" id="SSF52540">
    <property type="entry name" value="P-loop containing nucleoside triphosphate hydrolases"/>
    <property type="match status" value="1"/>
</dbReference>
<dbReference type="PROSITE" id="PS00211">
    <property type="entry name" value="ABC_TRANSPORTER_1"/>
    <property type="match status" value="1"/>
</dbReference>
<dbReference type="PROSITE" id="PS50893">
    <property type="entry name" value="ABC_TRANSPORTER_2"/>
    <property type="match status" value="1"/>
</dbReference>
<dbReference type="PROSITE" id="PS51238">
    <property type="entry name" value="PSTB"/>
    <property type="match status" value="1"/>
</dbReference>
<proteinExistence type="inferred from homology"/>
<reference key="1">
    <citation type="journal article" date="2014" name="Stand. Genomic Sci.">
        <title>Complete genome sequence of Anabaena variabilis ATCC 29413.</title>
        <authorList>
            <person name="Thiel T."/>
            <person name="Pratte B.S."/>
            <person name="Zhong J."/>
            <person name="Goodwin L."/>
            <person name="Copeland A."/>
            <person name="Lucas S."/>
            <person name="Han C."/>
            <person name="Pitluck S."/>
            <person name="Land M.L."/>
            <person name="Kyrpides N.C."/>
            <person name="Woyke T."/>
        </authorList>
    </citation>
    <scope>NUCLEOTIDE SEQUENCE [LARGE SCALE GENOMIC DNA]</scope>
    <source>
        <strain>ATCC 29413 / PCC 7937</strain>
    </source>
</reference>
<keyword id="KW-0067">ATP-binding</keyword>
<keyword id="KW-0997">Cell inner membrane</keyword>
<keyword id="KW-1003">Cell membrane</keyword>
<keyword id="KW-0472">Membrane</keyword>
<keyword id="KW-0547">Nucleotide-binding</keyword>
<keyword id="KW-0592">Phosphate transport</keyword>
<keyword id="KW-1278">Translocase</keyword>
<keyword id="KW-0813">Transport</keyword>
<name>PSTB5_TRIV2</name>
<organism>
    <name type="scientific">Trichormus variabilis (strain ATCC 29413 / PCC 7937)</name>
    <name type="common">Anabaena variabilis</name>
    <dbReference type="NCBI Taxonomy" id="240292"/>
    <lineage>
        <taxon>Bacteria</taxon>
        <taxon>Bacillati</taxon>
        <taxon>Cyanobacteriota</taxon>
        <taxon>Cyanophyceae</taxon>
        <taxon>Nostocales</taxon>
        <taxon>Nostocaceae</taxon>
        <taxon>Trichormus</taxon>
    </lineage>
</organism>
<evidence type="ECO:0000255" key="1">
    <source>
        <dbReference type="HAMAP-Rule" id="MF_01702"/>
    </source>
</evidence>